<evidence type="ECO:0000255" key="1"/>
<evidence type="ECO:0000305" key="2"/>
<evidence type="ECO:0000305" key="3">
    <source>
    </source>
</evidence>
<evidence type="ECO:0000312" key="4">
    <source>
        <dbReference type="SGD" id="S000004726"/>
    </source>
</evidence>
<dbReference type="EMBL" id="KJ412289">
    <property type="protein sequence ID" value="AHX39332.1"/>
    <property type="molecule type" value="Genomic_DNA"/>
</dbReference>
<dbReference type="PIR" id="S69864">
    <property type="entry name" value="S69864"/>
</dbReference>
<dbReference type="PaxDb" id="4932-YMR119W-A"/>
<dbReference type="EnsemblFungi" id="YMR119W-A_mRNA">
    <property type="protein sequence ID" value="YMR119W-A"/>
    <property type="gene ID" value="YMR119W-A"/>
</dbReference>
<dbReference type="AGR" id="SGD:S000004726"/>
<dbReference type="SGD" id="S000004726">
    <property type="gene designation" value="YMR119W-A"/>
</dbReference>
<dbReference type="HOGENOM" id="CLU_2062805_0_0_1"/>
<dbReference type="GO" id="GO:0016020">
    <property type="term" value="C:membrane"/>
    <property type="evidence" value="ECO:0007669"/>
    <property type="project" value="UniProtKB-SubCell"/>
</dbReference>
<keyword id="KW-0472">Membrane</keyword>
<keyword id="KW-0732">Signal</keyword>
<keyword id="KW-0812">Transmembrane</keyword>
<keyword id="KW-1133">Transmembrane helix</keyword>
<comment type="subcellular location">
    <subcellularLocation>
        <location evidence="1">Membrane</location>
        <topology evidence="1">Multi-pass membrane protein</topology>
    </subcellularLocation>
</comment>
<comment type="miscellaneous">
    <text evidence="2">Partially overlaps ASI1.</text>
</comment>
<comment type="caution">
    <text evidence="3">Product of a dubious gene prediction unlikely to encode a functional protein. Because of that it is not part of the S.cerevisiae S288c complete/reference proteome set.</text>
</comment>
<reference key="1">
    <citation type="journal article" date="1997" name="Nature">
        <title>The nucleotide sequence of Saccharomyces cerevisiae chromosome XIII.</title>
        <authorList>
            <person name="Bowman S."/>
            <person name="Churcher C.M."/>
            <person name="Badcock K."/>
            <person name="Brown D."/>
            <person name="Chillingworth T."/>
            <person name="Connor R."/>
            <person name="Dedman K."/>
            <person name="Devlin K."/>
            <person name="Gentles S."/>
            <person name="Hamlin N."/>
            <person name="Hunt S."/>
            <person name="Jagels K."/>
            <person name="Lye G."/>
            <person name="Moule S."/>
            <person name="Odell C."/>
            <person name="Pearson D."/>
            <person name="Rajandream M.A."/>
            <person name="Rice P."/>
            <person name="Skelton J."/>
            <person name="Walsh S.V."/>
            <person name="Whitehead S."/>
            <person name="Barrell B.G."/>
        </authorList>
    </citation>
    <scope>NUCLEOTIDE SEQUENCE [LARGE SCALE GENOMIC DNA]</scope>
    <source>
        <strain>ATCC 204508 / S288c</strain>
    </source>
</reference>
<reference key="2">
    <citation type="journal article" date="2014" name="G3 (Bethesda)">
        <title>The reference genome sequence of Saccharomyces cerevisiae: Then and now.</title>
        <authorList>
            <person name="Engel S.R."/>
            <person name="Dietrich F.S."/>
            <person name="Fisk D.G."/>
            <person name="Binkley G."/>
            <person name="Balakrishnan R."/>
            <person name="Costanzo M.C."/>
            <person name="Dwight S.S."/>
            <person name="Hitz B.C."/>
            <person name="Karra K."/>
            <person name="Nash R.S."/>
            <person name="Weng S."/>
            <person name="Wong E.D."/>
            <person name="Lloyd P."/>
            <person name="Skrzypek M.S."/>
            <person name="Miyasato S.R."/>
            <person name="Simison M."/>
            <person name="Cherry J.M."/>
        </authorList>
    </citation>
    <scope>GENOME REANNOTATION</scope>
    <source>
        <strain>ATCC 204508 / S288c</strain>
    </source>
</reference>
<proteinExistence type="uncertain"/>
<sequence>MRLLVQKVILIYLARYAKSMKEIQYYGPADVLPFARIAEFLWVYVGSALAYVVGVKFMGTVRFILFQIVNNSLRTFAWYLKEVFRLGALALITIARAFCVAHINIIIINQVFFLWEMFELKLYL</sequence>
<protein>
    <recommendedName>
        <fullName evidence="2">Putative uncharacterized membrane protein YMR119W-A</fullName>
    </recommendedName>
</protein>
<accession>A0A023PZL2</accession>
<feature type="signal peptide" evidence="1">
    <location>
        <begin position="1"/>
        <end position="19"/>
    </location>
</feature>
<feature type="chain" id="PRO_0000431057" description="Putative uncharacterized membrane protein YMR119W-A">
    <location>
        <begin position="20"/>
        <end position="124"/>
    </location>
</feature>
<feature type="transmembrane region" description="Helical; Name=1" evidence="1">
    <location>
        <begin position="37"/>
        <end position="57"/>
    </location>
</feature>
<feature type="transmembrane region" description="Helical; Name=2" evidence="1">
    <location>
        <begin position="86"/>
        <end position="108"/>
    </location>
</feature>
<name>YM119_YEAST</name>
<organism>
    <name type="scientific">Saccharomyces cerevisiae (strain ATCC 204508 / S288c)</name>
    <name type="common">Baker's yeast</name>
    <dbReference type="NCBI Taxonomy" id="559292"/>
    <lineage>
        <taxon>Eukaryota</taxon>
        <taxon>Fungi</taxon>
        <taxon>Dikarya</taxon>
        <taxon>Ascomycota</taxon>
        <taxon>Saccharomycotina</taxon>
        <taxon>Saccharomycetes</taxon>
        <taxon>Saccharomycetales</taxon>
        <taxon>Saccharomycetaceae</taxon>
        <taxon>Saccharomyces</taxon>
    </lineage>
</organism>
<gene>
    <name evidence="4" type="ordered locus">YMR119W-A</name>
</gene>